<organism evidence="10">
    <name type="scientific">Clitocybe nebularis</name>
    <name type="common">Clouded agaric</name>
    <name type="synonym">Lepista nebularis</name>
    <dbReference type="NCBI Taxonomy" id="117024"/>
    <lineage>
        <taxon>Eukaryota</taxon>
        <taxon>Fungi</taxon>
        <taxon>Dikarya</taxon>
        <taxon>Basidiomycota</taxon>
        <taxon>Agaricomycotina</taxon>
        <taxon>Agaricomycetes</taxon>
        <taxon>Agaricomycetidae</taxon>
        <taxon>Agaricales</taxon>
        <taxon>Tricholomatineae</taxon>
        <taxon>Clitocybaceae</taxon>
        <taxon>Clitocybe</taxon>
    </lineage>
</organism>
<evidence type="ECO:0000269" key="1">
    <source>
    </source>
</evidence>
<evidence type="ECO:0000269" key="2">
    <source>
    </source>
</evidence>
<evidence type="ECO:0000269" key="3">
    <source>
    </source>
</evidence>
<evidence type="ECO:0000269" key="4">
    <source>
    </source>
</evidence>
<evidence type="ECO:0000269" key="5">
    <source>
    </source>
</evidence>
<evidence type="ECO:0000303" key="6">
    <source>
    </source>
</evidence>
<evidence type="ECO:0000303" key="7">
    <source>
    </source>
</evidence>
<evidence type="ECO:0000305" key="8"/>
<evidence type="ECO:0000305" key="9">
    <source>
    </source>
</evidence>
<evidence type="ECO:0000312" key="10">
    <source>
        <dbReference type="EMBL" id="ACD47153.1"/>
    </source>
</evidence>
<evidence type="ECO:0007744" key="11">
    <source>
        <dbReference type="PDB" id="3NBC"/>
    </source>
</evidence>
<evidence type="ECO:0007744" key="12">
    <source>
        <dbReference type="PDB" id="3NBD"/>
    </source>
</evidence>
<evidence type="ECO:0007744" key="13">
    <source>
        <dbReference type="PDB" id="3NBE"/>
    </source>
</evidence>
<evidence type="ECO:0007829" key="14">
    <source>
        <dbReference type="PDB" id="3NBC"/>
    </source>
</evidence>
<proteinExistence type="evidence at protein level"/>
<dbReference type="EMBL" id="EU682006">
    <property type="protein sequence ID" value="ACD47153.1"/>
    <property type="molecule type" value="Genomic_DNA"/>
</dbReference>
<dbReference type="EMBL" id="FJ477895">
    <property type="protein sequence ID" value="ACK56062.1"/>
    <property type="molecule type" value="mRNA"/>
</dbReference>
<dbReference type="PDB" id="3NBC">
    <property type="method" value="X-ray"/>
    <property type="resolution" value="1.01 A"/>
    <property type="chains" value="A/B=2-149"/>
</dbReference>
<dbReference type="PDB" id="3NBD">
    <property type="method" value="X-ray"/>
    <property type="resolution" value="1.15 A"/>
    <property type="chains" value="A/B=2-149"/>
</dbReference>
<dbReference type="PDB" id="3NBE">
    <property type="method" value="X-ray"/>
    <property type="resolution" value="1.86 A"/>
    <property type="chains" value="A/B=2-149"/>
</dbReference>
<dbReference type="PDBsum" id="3NBC"/>
<dbReference type="PDBsum" id="3NBD"/>
<dbReference type="PDBsum" id="3NBE"/>
<dbReference type="SMR" id="B2ZRS9"/>
<dbReference type="UniLectin" id="B2ZRS9"/>
<dbReference type="iPTMnet" id="B2ZRS9"/>
<dbReference type="EvolutionaryTrace" id="B2ZRS9"/>
<dbReference type="GO" id="GO:0030246">
    <property type="term" value="F:carbohydrate binding"/>
    <property type="evidence" value="ECO:0007669"/>
    <property type="project" value="UniProtKB-KW"/>
</dbReference>
<dbReference type="GO" id="GO:0042803">
    <property type="term" value="F:protein homodimerization activity"/>
    <property type="evidence" value="ECO:0000314"/>
    <property type="project" value="UniProtKB"/>
</dbReference>
<dbReference type="CDD" id="cd23422">
    <property type="entry name" value="beta-trefoil_Ricin_MPL_CNL"/>
    <property type="match status" value="1"/>
</dbReference>
<dbReference type="FunFam" id="2.80.10.50:FF:000156">
    <property type="entry name" value="Ricin B-like lectin"/>
    <property type="match status" value="1"/>
</dbReference>
<dbReference type="Gene3D" id="2.80.10.50">
    <property type="match status" value="1"/>
</dbReference>
<dbReference type="InterPro" id="IPR035992">
    <property type="entry name" value="Ricin_B-like_lectins"/>
</dbReference>
<dbReference type="SUPFAM" id="SSF50370">
    <property type="entry name" value="Ricin B-like lectins"/>
    <property type="match status" value="1"/>
</dbReference>
<feature type="initiator methionine" description="Removed" evidence="1">
    <location>
        <position position="1"/>
    </location>
</feature>
<feature type="chain" id="PRO_0000435793" description="Ricin B-like lectin">
    <location>
        <begin position="2"/>
        <end position="149"/>
    </location>
</feature>
<feature type="region of interest" description="Involved in dimerization" evidence="5 11 12">
    <location>
        <begin position="110"/>
        <end position="112"/>
    </location>
</feature>
<feature type="binding site" evidence="5 11 12">
    <location>
        <position position="21"/>
    </location>
    <ligand>
        <name>a carbohydrate</name>
        <dbReference type="ChEBI" id="CHEBI:16646"/>
    </ligand>
</feature>
<feature type="binding site" evidence="5 11 12">
    <location>
        <position position="24"/>
    </location>
    <ligand>
        <name>a carbohydrate</name>
        <dbReference type="ChEBI" id="CHEBI:16646"/>
    </ligand>
</feature>
<feature type="binding site" evidence="5 11 12">
    <location>
        <position position="39"/>
    </location>
    <ligand>
        <name>a carbohydrate</name>
        <dbReference type="ChEBI" id="CHEBI:16646"/>
    </ligand>
</feature>
<feature type="binding site" evidence="5 11 12">
    <location>
        <position position="47"/>
    </location>
    <ligand>
        <name>a carbohydrate</name>
        <dbReference type="ChEBI" id="CHEBI:16646"/>
    </ligand>
</feature>
<feature type="modified residue" description="N-acetylserine" evidence="1">
    <location>
        <position position="2"/>
    </location>
</feature>
<feature type="mutagenesis site" description="No sugar-binding, hemagglutination of human group A erythrocytes nor toxicity to Jurkat leukemia cells." evidence="5">
    <original>D</original>
    <variation>R</variation>
    <location>
        <position position="21"/>
    </location>
</feature>
<feature type="mutagenesis site" description="No effect on sugar-binding, but loss of dimerization, hemagglutination of human group A erythrocytes and toxicity to Jurkat leukemia cells; when associated with D-111." evidence="5">
    <original>L</original>
    <variation>R</variation>
    <location>
        <position position="55"/>
    </location>
</feature>
<feature type="mutagenesis site" description="No effect on sugar-binding, but loss of dimerization, hemagglutination of human group A erythrocytes and toxicity to Jurkat leukemia cells; when associated with D-111." evidence="5">
    <original>L</original>
    <variation>W</variation>
    <location>
        <position position="55"/>
    </location>
</feature>
<feature type="mutagenesis site" description="No effect on sugar-binding, hemagglutination of human group A erythrocytes and dimerization, but reduced toxicity to Jurkat leukemia cells. No effect on sugar-binding, but loss of dimerization, hemagglutination of human group A erythrocytes and toxicity to Jurkat leukemia cells; when associated with R-55. No effect on sugar-binding, but loss of dimerization, hemagglutination of human group A erythrocytes and toxicity to Jurkat leukemia cells; when associated with W-55." evidence="5">
    <original>N</original>
    <variation>D</variation>
    <location>
        <position position="111"/>
    </location>
</feature>
<feature type="sequence conflict" description="In Ref. 1; AA sequence." evidence="8" ref="1">
    <original>T</original>
    <variation>V</variation>
    <location>
        <position position="31"/>
    </location>
</feature>
<feature type="sequence conflict" description="In Ref. 1; AA sequence." evidence="8" ref="1">
    <original>L</original>
    <variation>I</variation>
    <location>
        <position position="32"/>
    </location>
</feature>
<feature type="strand" evidence="14">
    <location>
        <begin position="5"/>
        <end position="14"/>
    </location>
</feature>
<feature type="strand" evidence="14">
    <location>
        <begin position="19"/>
        <end position="22"/>
    </location>
</feature>
<feature type="helix" evidence="14">
    <location>
        <begin position="23"/>
        <end position="25"/>
    </location>
</feature>
<feature type="strand" evidence="14">
    <location>
        <begin position="31"/>
        <end position="36"/>
    </location>
</feature>
<feature type="turn" evidence="14">
    <location>
        <begin position="41"/>
        <end position="43"/>
    </location>
</feature>
<feature type="strand" evidence="14">
    <location>
        <begin position="50"/>
        <end position="54"/>
    </location>
</feature>
<feature type="strand" evidence="14">
    <location>
        <begin position="58"/>
        <end position="68"/>
    </location>
</feature>
<feature type="strand" evidence="14">
    <location>
        <begin position="71"/>
        <end position="74"/>
    </location>
</feature>
<feature type="helix" evidence="14">
    <location>
        <begin position="75"/>
        <end position="77"/>
    </location>
</feature>
<feature type="strand" evidence="14">
    <location>
        <begin position="84"/>
        <end position="90"/>
    </location>
</feature>
<feature type="strand" evidence="14">
    <location>
        <begin position="94"/>
        <end position="98"/>
    </location>
</feature>
<feature type="strand" evidence="14">
    <location>
        <begin position="105"/>
        <end position="108"/>
    </location>
</feature>
<feature type="strand" evidence="14">
    <location>
        <begin position="112"/>
        <end position="117"/>
    </location>
</feature>
<feature type="strand" evidence="14">
    <location>
        <begin position="128"/>
        <end position="131"/>
    </location>
</feature>
<feature type="helix" evidence="14">
    <location>
        <begin position="137"/>
        <end position="139"/>
    </location>
</feature>
<feature type="strand" evidence="14">
    <location>
        <begin position="141"/>
        <end position="145"/>
    </location>
</feature>
<sequence length="149" mass="15993">MSITPGTYNITNVAYTNRLIDLTGSNPAENTLIIGHHLNKTPSGYGNQQWTLVQLPHTTIYTMQAVNPQSYVRVRDDNLVDGAALVGSQQPTPVSIESAGNSGQFRIKIPNLGLALTLPSDANSTPIVLGEVDETSTNQLWAFESVSAV</sequence>
<keyword id="KW-0002">3D-structure</keyword>
<keyword id="KW-0007">Acetylation</keyword>
<keyword id="KW-0903">Direct protein sequencing</keyword>
<keyword id="KW-0430">Lectin</keyword>
<reference evidence="10" key="1">
    <citation type="journal article" date="2009" name="Biochim. Biophys. Acta">
        <title>Purification, characterization and cloning of a ricin B-like lectin from mushroom Clitocybe nebularis with antiproliferative activity against human leukemic T cells.</title>
        <authorList>
            <person name="Pohleven J."/>
            <person name="Obermajer N."/>
            <person name="Sabotic J."/>
            <person name="Anzlovar S."/>
            <person name="Sepcic K."/>
            <person name="Kos J."/>
            <person name="Kralj B."/>
            <person name="Strukelj B."/>
            <person name="Brzin J."/>
        </authorList>
    </citation>
    <scope>NUCLEOTIDE SEQUENCE [GENOMIC DNA / MRNA]</scope>
    <scope>PROTEIN SEQUENCE OF 3-32; 41-70; 74-105; 109-114; 117-136 AND 142-149</scope>
    <scope>FUNCTION</scope>
    <scope>BIOPHYSICOCHEMICAL PROPERTIES</scope>
    <scope>SUBSTRATE SPECIFICITY</scope>
    <scope>SUBUNIT</scope>
    <scope>PTM</scope>
    <scope>MASS SPECTROMETRY</scope>
    <scope>ACETYLATION AT SER-2</scope>
    <source>
        <strain evidence="10">Vrh2004</strain>
        <tissue evidence="10">Fruiting body</tissue>
    </source>
</reference>
<reference evidence="11 12 13" key="2">
    <citation type="journal article" date="2012" name="J. Biol. Chem.">
        <title>Bivalent carbohydrate binding is required for biological activity of Clitocybe nebularis lectin (CNL), the N,N'-diacetyllactosediamine (GalNAcbeta1-4GlcNAc, LacdiNAc)-specific lectin from basidiomycete C. nebularis.</title>
        <authorList>
            <person name="Pohleven J."/>
            <person name="Renko M."/>
            <person name="Magister S."/>
            <person name="Smith D.F."/>
            <person name="Kunzler M."/>
            <person name="Strukelj B."/>
            <person name="Turk D."/>
            <person name="Kos J."/>
            <person name="Sabotic J."/>
        </authorList>
    </citation>
    <scope>PARTIAL PROTEIN SEQUENCE</scope>
    <scope>X-RAY CRYSTALLOGRAPHY (1.01 ANGSTROMS) OF 2-149 IN COMPLEX WITH LACTOSE AND LDN</scope>
    <scope>FUNCTION</scope>
    <scope>SUBSTRATE SPECIFICITY</scope>
    <scope>SUBUNIT</scope>
    <scope>DOMAIN</scope>
    <scope>MASS SPECTROMETRY</scope>
    <scope>CIRCULAR DICHROISM ANALYSIS</scope>
    <scope>MUTAGENESIS OF ASP-21; LEU-55 AND ASN-111</scope>
    <source>
        <tissue evidence="5">Fruiting body</tissue>
    </source>
</reference>
<reference key="3">
    <citation type="journal article" date="2011" name="Appl. Microbiol. Biotechnol.">
        <title>Basidiomycete Clitocybe nebularis is rich in lectins with insecticidal activities.</title>
        <authorList>
            <person name="Pohleven J."/>
            <person name="Brzin J."/>
            <person name="Vrabec L."/>
            <person name="Leonardi A."/>
            <person name="Cokl A."/>
            <person name="Strukelj B."/>
            <person name="Kos J."/>
            <person name="Sabotic J."/>
        </authorList>
    </citation>
    <scope>FUNCTION</scope>
    <scope>MASS SPECTROMETRY</scope>
    <scope>BIOTECHNOLOGY</scope>
</reference>
<reference key="4">
    <citation type="journal article" date="2011" name="Immunology">
        <title>CNL, a ricin B-like lectin from mushroom Clitocybe nebularis, induces maturation and activation of dendritic cells via the toll-like receptor 4 pathway.</title>
        <authorList>
            <person name="Svajger U."/>
            <person name="Pohleven J."/>
            <person name="Kos J."/>
            <person name="Strukelj B."/>
            <person name="Jeras M."/>
        </authorList>
    </citation>
    <scope>FUNCTION</scope>
</reference>
<reference key="5">
    <citation type="journal article" date="2011" name="Mol. Ecol.">
        <title>A lectin-mediated resistance of higher fungi against predators and parasites.</title>
        <authorList>
            <person name="Bleuler-Martinez S."/>
            <person name="Butschi A."/>
            <person name="Garbani M."/>
            <person name="Waelti M.A."/>
            <person name="Wohlschlager T."/>
            <person name="Potthoff E."/>
            <person name="Sabotic J."/>
            <person name="Pohleven J."/>
            <person name="Luethy P."/>
            <person name="Hengartner M.O."/>
            <person name="Aebi M."/>
            <person name="Kuenzler M."/>
        </authorList>
    </citation>
    <scope>FUNCTION</scope>
</reference>
<name>CNL_CLINE</name>
<accession>B2ZRS9</accession>
<comment type="function">
    <text evidence="1 2 3 4 5">Lectin specific for terminal, non-reducing N-acetylgalactosamine (Gal-NAc)-containing carbohydrates including N,N'-diacetyllactosediamine/LDN (GalNAcbeta1-4GlcNAc, LacdiNAc). Specific also for carbohydrates containing N-acetylglucosamine (-GlcNAc) or N-acetyllactosamine (-Galbeta1-4GlcNAc) at the reducing end. Agglutinates human blood group A, AB, B and O erythrocytes with a strong preference for group A. Agglutinates bovine erythrocytes with a very low specificity (PubMed:19100814, PubMed:22298779). Binds carbohydrates bivalently, which is required for its biological activity (PubMed:22298779). Exhibits insecticidal activity against the fruit fly D.melanogaster, mosquito A.aegypti, and amoebozoa A.castellanii. Has anti-nutritional activity against Colorado potato beetle L.decemlineata, and against worm C.elegans (PubMed:21486374, PubMed:21556921). Has antiproliferative activity against human leukemic T-cells (PubMed:19100814). Has an immunostimulatory effect on human antigen-presenting dendritic cells, which are subsequently able to induce efficient T-cell immune responses (PubMed:22044067).</text>
</comment>
<comment type="biophysicochemical properties">
    <phDependence>
        <text evidence="1">Optimum pH is 6-6.5. Retains more than 70% of the maximum agglutinating activity over the pH range 5-9.</text>
    </phDependence>
    <temperatureDependence>
        <text evidence="1">Unchanged hemagglutinating activity after 30 minutes incubation at temperatures up to 50 degrees Celsius, then at higher temperatures activity decreases. 14% of the initial activity is retained even after heating at 100 degrees Celsius.</text>
    </temperatureDependence>
</comment>
<comment type="subunit">
    <text evidence="1 5">Homodimer.</text>
</comment>
<comment type="domain">
    <text evidence="9">Contains a single ricin B lectin domain with a characteristic beta-trefoil fold consisting of three repeated subdomains each containing a more or less conserved QXW motif.</text>
</comment>
<comment type="PTM">
    <text evidence="1">The N-terminus is blocked.</text>
</comment>
<comment type="mass spectrometry" mass="15903.5" method="Electrospray" evidence="1"/>
<comment type="mass spectrometry" mass="15992.0" method="Electrospray" evidence="5"/>
<comment type="mass spectrometry" mass="15903.0" method="Electrospray" evidence="3"/>
<comment type="biotechnology">
    <text evidence="7">Potential for use as natural insecticide.</text>
</comment>
<protein>
    <recommendedName>
        <fullName evidence="6">Ricin B-like lectin</fullName>
    </recommendedName>
    <alternativeName>
        <fullName evidence="6">Clitocybe nebularis lectin</fullName>
        <shortName evidence="6">CNL</shortName>
    </alternativeName>
</protein>